<accession>Q8K9C6</accession>
<sequence length="319" mass="37466">MSLSKCFKNSIYPSINLPLTLSLLEEWCLIYICGIDSKKHLQNQFTIDINCLKKEEYKLCAHCNFNGKVWATMFIFHYKKGFAYIIRKSIAKIQIKELKKYAIFSKVEIRELDDIYLFGLSGFNAKFFLSKNFVDIPNKNCSLISNQDRTILWFSEPCERFLLVLSLKDLLLLKRKENEITLLNNSKQWLLFDIEAGFPIIDKQTSQKFLPQSINLILLQAVSFDKGCYYGQETIARVFYKNLNKYSLYLLSSKGNINPKIGSIIEMKKEEKWYRIGFLLAIVHVEFNRTVIQAVLNKSINIQNIFRIYEFKNIFLIKN</sequence>
<gene>
    <name type="ordered locus">BUsg_420</name>
</gene>
<keyword id="KW-0963">Cytoplasm</keyword>
<keyword id="KW-0290">Folate-binding</keyword>
<keyword id="KW-0819">tRNA processing</keyword>
<proteinExistence type="inferred from homology"/>
<feature type="chain" id="PRO_0000216254" description="tRNA-modifying protein YgfZ">
    <location>
        <begin position="1"/>
        <end position="319"/>
    </location>
</feature>
<feature type="binding site" evidence="1">
    <location>
        <position position="27"/>
    </location>
    <ligand>
        <name>folate</name>
        <dbReference type="ChEBI" id="CHEBI:62501"/>
    </ligand>
</feature>
<feature type="binding site" evidence="1">
    <location>
        <position position="189"/>
    </location>
    <ligand>
        <name>folate</name>
        <dbReference type="ChEBI" id="CHEBI:62501"/>
    </ligand>
</feature>
<evidence type="ECO:0000255" key="1">
    <source>
        <dbReference type="HAMAP-Rule" id="MF_01175"/>
    </source>
</evidence>
<organism>
    <name type="scientific">Buchnera aphidicola subsp. Schizaphis graminum (strain Sg)</name>
    <dbReference type="NCBI Taxonomy" id="198804"/>
    <lineage>
        <taxon>Bacteria</taxon>
        <taxon>Pseudomonadati</taxon>
        <taxon>Pseudomonadota</taxon>
        <taxon>Gammaproteobacteria</taxon>
        <taxon>Enterobacterales</taxon>
        <taxon>Erwiniaceae</taxon>
        <taxon>Buchnera</taxon>
    </lineage>
</organism>
<protein>
    <recommendedName>
        <fullName evidence="1">tRNA-modifying protein YgfZ</fullName>
    </recommendedName>
</protein>
<name>YGFZ_BUCAP</name>
<comment type="function">
    <text evidence="1">Folate-binding protein involved in regulating the level of ATP-DnaA and in the modification of some tRNAs. It is probably a key factor in regulatory networks that act via tRNA modification, such as initiation of chromosomal replication.</text>
</comment>
<comment type="subcellular location">
    <subcellularLocation>
        <location evidence="1">Cytoplasm</location>
    </subcellularLocation>
</comment>
<comment type="similarity">
    <text evidence="1">Belongs to the tRNA-modifying YgfZ family.</text>
</comment>
<reference key="1">
    <citation type="journal article" date="2002" name="Science">
        <title>50 million years of genomic stasis in endosymbiotic bacteria.</title>
        <authorList>
            <person name="Tamas I."/>
            <person name="Klasson L."/>
            <person name="Canbaeck B."/>
            <person name="Naeslund A.K."/>
            <person name="Eriksson A.-S."/>
            <person name="Wernegreen J.J."/>
            <person name="Sandstroem J.P."/>
            <person name="Moran N.A."/>
            <person name="Andersson S.G.E."/>
        </authorList>
    </citation>
    <scope>NUCLEOTIDE SEQUENCE [LARGE SCALE GENOMIC DNA]</scope>
    <source>
        <strain>Sg</strain>
    </source>
</reference>
<dbReference type="EMBL" id="AE013218">
    <property type="protein sequence ID" value="AAM67965.1"/>
    <property type="molecule type" value="Genomic_DNA"/>
</dbReference>
<dbReference type="RefSeq" id="WP_011053932.1">
    <property type="nucleotide sequence ID" value="NC_004061.1"/>
</dbReference>
<dbReference type="SMR" id="Q8K9C6"/>
<dbReference type="STRING" id="198804.BUsg_420"/>
<dbReference type="GeneID" id="93003892"/>
<dbReference type="KEGG" id="bas:BUsg_420"/>
<dbReference type="eggNOG" id="COG0354">
    <property type="taxonomic scope" value="Bacteria"/>
</dbReference>
<dbReference type="HOGENOM" id="CLU_007884_6_1_6"/>
<dbReference type="Proteomes" id="UP000000416">
    <property type="component" value="Chromosome"/>
</dbReference>
<dbReference type="GO" id="GO:0005737">
    <property type="term" value="C:cytoplasm"/>
    <property type="evidence" value="ECO:0007669"/>
    <property type="project" value="UniProtKB-SubCell"/>
</dbReference>
<dbReference type="GO" id="GO:0005542">
    <property type="term" value="F:folic acid binding"/>
    <property type="evidence" value="ECO:0007669"/>
    <property type="project" value="UniProtKB-UniRule"/>
</dbReference>
<dbReference type="GO" id="GO:0016226">
    <property type="term" value="P:iron-sulfur cluster assembly"/>
    <property type="evidence" value="ECO:0007669"/>
    <property type="project" value="TreeGrafter"/>
</dbReference>
<dbReference type="GO" id="GO:0009451">
    <property type="term" value="P:RNA modification"/>
    <property type="evidence" value="ECO:0007669"/>
    <property type="project" value="InterPro"/>
</dbReference>
<dbReference type="GO" id="GO:0008033">
    <property type="term" value="P:tRNA processing"/>
    <property type="evidence" value="ECO:0007669"/>
    <property type="project" value="UniProtKB-UniRule"/>
</dbReference>
<dbReference type="Gene3D" id="2.40.30.160">
    <property type="match status" value="1"/>
</dbReference>
<dbReference type="Gene3D" id="3.30.70.1630">
    <property type="match status" value="1"/>
</dbReference>
<dbReference type="Gene3D" id="3.30.70.1400">
    <property type="entry name" value="Aminomethyltransferase beta-barrel domains"/>
    <property type="match status" value="1"/>
</dbReference>
<dbReference type="HAMAP" id="MF_01175">
    <property type="entry name" value="tRNA_modifying_YgfZ"/>
    <property type="match status" value="1"/>
</dbReference>
<dbReference type="InterPro" id="IPR029043">
    <property type="entry name" value="GcvT/YgfZ_C"/>
</dbReference>
<dbReference type="InterPro" id="IPR023758">
    <property type="entry name" value="tRNA-modifying_YgfZ"/>
</dbReference>
<dbReference type="InterPro" id="IPR045179">
    <property type="entry name" value="YgfZ/GcvT"/>
</dbReference>
<dbReference type="InterPro" id="IPR017703">
    <property type="entry name" value="YgfZ/GcvT_CS"/>
</dbReference>
<dbReference type="InterPro" id="IPR048451">
    <property type="entry name" value="YgfZ_barrel"/>
</dbReference>
<dbReference type="NCBIfam" id="NF007110">
    <property type="entry name" value="PRK09559.1"/>
    <property type="match status" value="1"/>
</dbReference>
<dbReference type="NCBIfam" id="TIGR03317">
    <property type="entry name" value="ygfZ_signature"/>
    <property type="match status" value="1"/>
</dbReference>
<dbReference type="PANTHER" id="PTHR22602">
    <property type="entry name" value="TRANSFERASE CAF17, MITOCHONDRIAL-RELATED"/>
    <property type="match status" value="1"/>
</dbReference>
<dbReference type="PANTHER" id="PTHR22602:SF0">
    <property type="entry name" value="TRANSFERASE CAF17, MITOCHONDRIAL-RELATED"/>
    <property type="match status" value="1"/>
</dbReference>
<dbReference type="Pfam" id="PF21130">
    <property type="entry name" value="YgfZ_barrel"/>
    <property type="match status" value="1"/>
</dbReference>
<dbReference type="SUPFAM" id="SSF101790">
    <property type="entry name" value="Aminomethyltransferase beta-barrel domain"/>
    <property type="match status" value="1"/>
</dbReference>
<dbReference type="SUPFAM" id="SSF103025">
    <property type="entry name" value="Folate-binding domain"/>
    <property type="match status" value="1"/>
</dbReference>